<dbReference type="EC" id="6.3.5.2" evidence="1"/>
<dbReference type="EMBL" id="BX571856">
    <property type="protein sequence ID" value="CAG39433.1"/>
    <property type="molecule type" value="Genomic_DNA"/>
</dbReference>
<dbReference type="RefSeq" id="WP_000424963.1">
    <property type="nucleotide sequence ID" value="NC_002952.2"/>
</dbReference>
<dbReference type="SMR" id="Q6GJQ6"/>
<dbReference type="GeneID" id="98344714"/>
<dbReference type="KEGG" id="sar:SAR0409"/>
<dbReference type="HOGENOM" id="CLU_014340_0_5_9"/>
<dbReference type="UniPathway" id="UPA00189">
    <property type="reaction ID" value="UER00296"/>
</dbReference>
<dbReference type="Proteomes" id="UP000000596">
    <property type="component" value="Chromosome"/>
</dbReference>
<dbReference type="GO" id="GO:0005829">
    <property type="term" value="C:cytosol"/>
    <property type="evidence" value="ECO:0007669"/>
    <property type="project" value="TreeGrafter"/>
</dbReference>
<dbReference type="GO" id="GO:0005524">
    <property type="term" value="F:ATP binding"/>
    <property type="evidence" value="ECO:0007669"/>
    <property type="project" value="UniProtKB-UniRule"/>
</dbReference>
<dbReference type="GO" id="GO:0003921">
    <property type="term" value="F:GMP synthase activity"/>
    <property type="evidence" value="ECO:0007669"/>
    <property type="project" value="InterPro"/>
</dbReference>
<dbReference type="CDD" id="cd01742">
    <property type="entry name" value="GATase1_GMP_Synthase"/>
    <property type="match status" value="1"/>
</dbReference>
<dbReference type="CDD" id="cd01997">
    <property type="entry name" value="GMP_synthase_C"/>
    <property type="match status" value="1"/>
</dbReference>
<dbReference type="FunFam" id="3.30.300.10:FF:000002">
    <property type="entry name" value="GMP synthase [glutamine-hydrolyzing]"/>
    <property type="match status" value="1"/>
</dbReference>
<dbReference type="FunFam" id="3.40.50.620:FF:000001">
    <property type="entry name" value="GMP synthase [glutamine-hydrolyzing]"/>
    <property type="match status" value="1"/>
</dbReference>
<dbReference type="FunFam" id="3.40.50.880:FF:000001">
    <property type="entry name" value="GMP synthase [glutamine-hydrolyzing]"/>
    <property type="match status" value="1"/>
</dbReference>
<dbReference type="Gene3D" id="3.30.300.10">
    <property type="match status" value="1"/>
</dbReference>
<dbReference type="Gene3D" id="3.40.50.880">
    <property type="match status" value="1"/>
</dbReference>
<dbReference type="Gene3D" id="3.40.50.620">
    <property type="entry name" value="HUPs"/>
    <property type="match status" value="1"/>
</dbReference>
<dbReference type="HAMAP" id="MF_00344">
    <property type="entry name" value="GMP_synthase"/>
    <property type="match status" value="1"/>
</dbReference>
<dbReference type="InterPro" id="IPR029062">
    <property type="entry name" value="Class_I_gatase-like"/>
</dbReference>
<dbReference type="InterPro" id="IPR017926">
    <property type="entry name" value="GATASE"/>
</dbReference>
<dbReference type="InterPro" id="IPR001674">
    <property type="entry name" value="GMP_synth_C"/>
</dbReference>
<dbReference type="InterPro" id="IPR004739">
    <property type="entry name" value="GMP_synth_GATase"/>
</dbReference>
<dbReference type="InterPro" id="IPR022955">
    <property type="entry name" value="GMP_synthase"/>
</dbReference>
<dbReference type="InterPro" id="IPR025777">
    <property type="entry name" value="GMPS_ATP_PPase_dom"/>
</dbReference>
<dbReference type="InterPro" id="IPR014729">
    <property type="entry name" value="Rossmann-like_a/b/a_fold"/>
</dbReference>
<dbReference type="NCBIfam" id="TIGR00884">
    <property type="entry name" value="guaA_Cterm"/>
    <property type="match status" value="1"/>
</dbReference>
<dbReference type="NCBIfam" id="TIGR00888">
    <property type="entry name" value="guaA_Nterm"/>
    <property type="match status" value="1"/>
</dbReference>
<dbReference type="NCBIfam" id="NF000848">
    <property type="entry name" value="PRK00074.1"/>
    <property type="match status" value="1"/>
</dbReference>
<dbReference type="PANTHER" id="PTHR11922:SF2">
    <property type="entry name" value="GMP SYNTHASE [GLUTAMINE-HYDROLYZING]"/>
    <property type="match status" value="1"/>
</dbReference>
<dbReference type="PANTHER" id="PTHR11922">
    <property type="entry name" value="GMP SYNTHASE-RELATED"/>
    <property type="match status" value="1"/>
</dbReference>
<dbReference type="Pfam" id="PF00117">
    <property type="entry name" value="GATase"/>
    <property type="match status" value="1"/>
</dbReference>
<dbReference type="Pfam" id="PF00958">
    <property type="entry name" value="GMP_synt_C"/>
    <property type="match status" value="1"/>
</dbReference>
<dbReference type="Pfam" id="PF03054">
    <property type="entry name" value="tRNA_Me_trans"/>
    <property type="match status" value="1"/>
</dbReference>
<dbReference type="PRINTS" id="PR00097">
    <property type="entry name" value="ANTSNTHASEII"/>
</dbReference>
<dbReference type="PRINTS" id="PR00099">
    <property type="entry name" value="CPSGATASE"/>
</dbReference>
<dbReference type="PRINTS" id="PR00096">
    <property type="entry name" value="GATASE"/>
</dbReference>
<dbReference type="SUPFAM" id="SSF52402">
    <property type="entry name" value="Adenine nucleotide alpha hydrolases-like"/>
    <property type="match status" value="1"/>
</dbReference>
<dbReference type="SUPFAM" id="SSF52317">
    <property type="entry name" value="Class I glutamine amidotransferase-like"/>
    <property type="match status" value="1"/>
</dbReference>
<dbReference type="SUPFAM" id="SSF54810">
    <property type="entry name" value="GMP synthetase C-terminal dimerisation domain"/>
    <property type="match status" value="1"/>
</dbReference>
<dbReference type="PROSITE" id="PS51273">
    <property type="entry name" value="GATASE_TYPE_1"/>
    <property type="match status" value="1"/>
</dbReference>
<dbReference type="PROSITE" id="PS51553">
    <property type="entry name" value="GMPS_ATP_PPASE"/>
    <property type="match status" value="1"/>
</dbReference>
<keyword id="KW-0067">ATP-binding</keyword>
<keyword id="KW-0315">Glutamine amidotransferase</keyword>
<keyword id="KW-0332">GMP biosynthesis</keyword>
<keyword id="KW-0436">Ligase</keyword>
<keyword id="KW-0547">Nucleotide-binding</keyword>
<keyword id="KW-0658">Purine biosynthesis</keyword>
<evidence type="ECO:0000255" key="1">
    <source>
        <dbReference type="HAMAP-Rule" id="MF_00344"/>
    </source>
</evidence>
<reference key="1">
    <citation type="journal article" date="2004" name="Proc. Natl. Acad. Sci. U.S.A.">
        <title>Complete genomes of two clinical Staphylococcus aureus strains: evidence for the rapid evolution of virulence and drug resistance.</title>
        <authorList>
            <person name="Holden M.T.G."/>
            <person name="Feil E.J."/>
            <person name="Lindsay J.A."/>
            <person name="Peacock S.J."/>
            <person name="Day N.P.J."/>
            <person name="Enright M.C."/>
            <person name="Foster T.J."/>
            <person name="Moore C.E."/>
            <person name="Hurst L."/>
            <person name="Atkin R."/>
            <person name="Barron A."/>
            <person name="Bason N."/>
            <person name="Bentley S.D."/>
            <person name="Chillingworth C."/>
            <person name="Chillingworth T."/>
            <person name="Churcher C."/>
            <person name="Clark L."/>
            <person name="Corton C."/>
            <person name="Cronin A."/>
            <person name="Doggett J."/>
            <person name="Dowd L."/>
            <person name="Feltwell T."/>
            <person name="Hance Z."/>
            <person name="Harris B."/>
            <person name="Hauser H."/>
            <person name="Holroyd S."/>
            <person name="Jagels K."/>
            <person name="James K.D."/>
            <person name="Lennard N."/>
            <person name="Line A."/>
            <person name="Mayes R."/>
            <person name="Moule S."/>
            <person name="Mungall K."/>
            <person name="Ormond D."/>
            <person name="Quail M.A."/>
            <person name="Rabbinowitsch E."/>
            <person name="Rutherford K.M."/>
            <person name="Sanders M."/>
            <person name="Sharp S."/>
            <person name="Simmonds M."/>
            <person name="Stevens K."/>
            <person name="Whitehead S."/>
            <person name="Barrell B.G."/>
            <person name="Spratt B.G."/>
            <person name="Parkhill J."/>
        </authorList>
    </citation>
    <scope>NUCLEOTIDE SEQUENCE [LARGE SCALE GENOMIC DNA]</scope>
    <source>
        <strain>MRSA252</strain>
    </source>
</reference>
<accession>Q6GJQ6</accession>
<sequence>MEMAKEQELILVLDFGSQYNQLITRRIREMGVYSELHDHEISIEEIKKMNPKGIILSGGPNSVYEEGSFTIDPEIYNLGIPVLGICYGMQLTTKLLGGKVERANEREYGKAIINAKSDELFAGLPAEQTVWMSHSDKVIEIPEGFEVIADSPSTDYAAIEDKKRRIYGVQFHPEVRHTEYGNDLLNNFVRRVCDCKGQWTMENFIEIEIEKIRQRVGDRRVLCAMSGGVDSSVVAVLLHKAIGDQLTCIFVDHGLLRKGEGDMVMEQFGEGFNMNIIRVNAKDRFMNKLKGVSDPEQKRKIIGNEFVYVFDDEASKLKGVDFLAQGTLYTDVIESGTKTAQTIKSHHNVGGLPEDMEFELIEPINTLFKDEVRKLGIELGIPEHLVWRQPFPGPGLGIRVLGEITEDKLEIVRESDAILRQVIREEGLEREIWQYFTVLPNIQSVGVMGDYRTYDHTVGIRAVTSIDGMTSDFARIDWEVLQKISSRIVNEVDHVNRVVYDITSKPPSTIEWE</sequence>
<name>GUAA_STAAR</name>
<protein>
    <recommendedName>
        <fullName evidence="1">GMP synthase [glutamine-hydrolyzing]</fullName>
        <ecNumber evidence="1">6.3.5.2</ecNumber>
    </recommendedName>
    <alternativeName>
        <fullName evidence="1">GMP synthetase</fullName>
    </alternativeName>
    <alternativeName>
        <fullName evidence="1">Glutamine amidotransferase</fullName>
    </alternativeName>
</protein>
<gene>
    <name evidence="1" type="primary">guaA</name>
    <name type="ordered locus">SAR0409</name>
</gene>
<feature type="chain" id="PRO_0000140178" description="GMP synthase [glutamine-hydrolyzing]">
    <location>
        <begin position="1"/>
        <end position="513"/>
    </location>
</feature>
<feature type="domain" description="Glutamine amidotransferase type-1" evidence="1">
    <location>
        <begin position="9"/>
        <end position="198"/>
    </location>
</feature>
<feature type="domain" description="GMPS ATP-PPase" evidence="1">
    <location>
        <begin position="199"/>
        <end position="388"/>
    </location>
</feature>
<feature type="active site" description="Nucleophile" evidence="1">
    <location>
        <position position="86"/>
    </location>
</feature>
<feature type="active site" evidence="1">
    <location>
        <position position="172"/>
    </location>
</feature>
<feature type="active site" evidence="1">
    <location>
        <position position="174"/>
    </location>
</feature>
<feature type="binding site" evidence="1">
    <location>
        <begin position="226"/>
        <end position="232"/>
    </location>
    <ligand>
        <name>ATP</name>
        <dbReference type="ChEBI" id="CHEBI:30616"/>
    </ligand>
</feature>
<proteinExistence type="inferred from homology"/>
<organism>
    <name type="scientific">Staphylococcus aureus (strain MRSA252)</name>
    <dbReference type="NCBI Taxonomy" id="282458"/>
    <lineage>
        <taxon>Bacteria</taxon>
        <taxon>Bacillati</taxon>
        <taxon>Bacillota</taxon>
        <taxon>Bacilli</taxon>
        <taxon>Bacillales</taxon>
        <taxon>Staphylococcaceae</taxon>
        <taxon>Staphylococcus</taxon>
    </lineage>
</organism>
<comment type="function">
    <text evidence="1">Catalyzes the synthesis of GMP from XMP.</text>
</comment>
<comment type="catalytic activity">
    <reaction evidence="1">
        <text>XMP + L-glutamine + ATP + H2O = GMP + L-glutamate + AMP + diphosphate + 2 H(+)</text>
        <dbReference type="Rhea" id="RHEA:11680"/>
        <dbReference type="ChEBI" id="CHEBI:15377"/>
        <dbReference type="ChEBI" id="CHEBI:15378"/>
        <dbReference type="ChEBI" id="CHEBI:29985"/>
        <dbReference type="ChEBI" id="CHEBI:30616"/>
        <dbReference type="ChEBI" id="CHEBI:33019"/>
        <dbReference type="ChEBI" id="CHEBI:57464"/>
        <dbReference type="ChEBI" id="CHEBI:58115"/>
        <dbReference type="ChEBI" id="CHEBI:58359"/>
        <dbReference type="ChEBI" id="CHEBI:456215"/>
        <dbReference type="EC" id="6.3.5.2"/>
    </reaction>
</comment>
<comment type="pathway">
    <text evidence="1">Purine metabolism; GMP biosynthesis; GMP from XMP (L-Gln route): step 1/1.</text>
</comment>
<comment type="subunit">
    <text evidence="1">Homodimer.</text>
</comment>